<organism>
    <name type="scientific">Caenorhabditis elegans</name>
    <dbReference type="NCBI Taxonomy" id="6239"/>
    <lineage>
        <taxon>Eukaryota</taxon>
        <taxon>Metazoa</taxon>
        <taxon>Ecdysozoa</taxon>
        <taxon>Nematoda</taxon>
        <taxon>Chromadorea</taxon>
        <taxon>Rhabditida</taxon>
        <taxon>Rhabditina</taxon>
        <taxon>Rhabditomorpha</taxon>
        <taxon>Rhabditoidea</taxon>
        <taxon>Rhabditidae</taxon>
        <taxon>Peloderinae</taxon>
        <taxon>Caenorhabditis</taxon>
    </lineage>
</organism>
<evidence type="ECO:0000250" key="1"/>
<evidence type="ECO:0000250" key="2">
    <source>
        <dbReference type="UniProtKB" id="O08600"/>
    </source>
</evidence>
<evidence type="ECO:0000255" key="3"/>
<evidence type="ECO:0000255" key="4">
    <source>
        <dbReference type="PROSITE-ProRule" id="PRU10047"/>
    </source>
</evidence>
<evidence type="ECO:0000269" key="5">
    <source>
    </source>
</evidence>
<evidence type="ECO:0000269" key="6">
    <source>
    </source>
</evidence>
<evidence type="ECO:0000305" key="7"/>
<evidence type="ECO:0007829" key="8">
    <source>
        <dbReference type="PDB" id="3S5B"/>
    </source>
</evidence>
<accession>Q95NM6</accession>
<feature type="transit peptide" description="Mitochondrion" evidence="3">
    <location>
        <begin position="1"/>
        <end status="unknown"/>
    </location>
</feature>
<feature type="chain" id="PRO_0000019920" description="Endonuclease G, mitochondrial">
    <location>
        <begin status="unknown"/>
        <end position="308"/>
    </location>
</feature>
<feature type="active site" description="Proton acceptor" evidence="4">
    <location>
        <position position="148"/>
    </location>
</feature>
<feature type="binding site" evidence="1">
    <location>
        <position position="180"/>
    </location>
    <ligand>
        <name>Mg(2+)</name>
        <dbReference type="ChEBI" id="CHEBI:18420"/>
        <note>catalytic</note>
    </ligand>
</feature>
<feature type="disulfide bond" description="Interchain" evidence="2">
    <location>
        <position position="120"/>
    </location>
</feature>
<feature type="helix" evidence="8">
    <location>
        <begin position="64"/>
        <end position="69"/>
    </location>
</feature>
<feature type="turn" evidence="8">
    <location>
        <begin position="70"/>
        <end position="72"/>
    </location>
</feature>
<feature type="strand" evidence="8">
    <location>
        <begin position="80"/>
        <end position="82"/>
    </location>
</feature>
<feature type="strand" evidence="8">
    <location>
        <begin position="87"/>
        <end position="91"/>
    </location>
</feature>
<feature type="turn" evidence="8">
    <location>
        <begin position="92"/>
        <end position="95"/>
    </location>
</feature>
<feature type="strand" evidence="8">
    <location>
        <begin position="96"/>
        <end position="104"/>
    </location>
</feature>
<feature type="turn" evidence="8">
    <location>
        <begin position="106"/>
        <end position="108"/>
    </location>
</feature>
<feature type="helix" evidence="8">
    <location>
        <begin position="117"/>
        <end position="119"/>
    </location>
</feature>
<feature type="helix" evidence="8">
    <location>
        <begin position="130"/>
        <end position="132"/>
    </location>
</feature>
<feature type="helix" evidence="8">
    <location>
        <begin position="136"/>
        <end position="139"/>
    </location>
</feature>
<feature type="turn" evidence="8">
    <location>
        <begin position="140"/>
        <end position="143"/>
    </location>
</feature>
<feature type="strand" evidence="8">
    <location>
        <begin position="145"/>
        <end position="150"/>
    </location>
</feature>
<feature type="helix" evidence="8">
    <location>
        <begin position="152"/>
        <end position="154"/>
    </location>
</feature>
<feature type="helix" evidence="8">
    <location>
        <begin position="159"/>
        <end position="164"/>
    </location>
</feature>
<feature type="helix" evidence="8">
    <location>
        <begin position="168"/>
        <end position="170"/>
    </location>
</feature>
<feature type="strand" evidence="8">
    <location>
        <begin position="171"/>
        <end position="174"/>
    </location>
</feature>
<feature type="helix" evidence="8">
    <location>
        <begin position="176"/>
        <end position="180"/>
    </location>
</feature>
<feature type="helix" evidence="8">
    <location>
        <begin position="183"/>
        <end position="195"/>
    </location>
</feature>
<feature type="strand" evidence="8">
    <location>
        <begin position="201"/>
        <end position="208"/>
    </location>
</feature>
<feature type="strand" evidence="8">
    <location>
        <begin position="211"/>
        <end position="213"/>
    </location>
</feature>
<feature type="strand" evidence="8">
    <location>
        <begin position="219"/>
        <end position="226"/>
    </location>
</feature>
<feature type="turn" evidence="8">
    <location>
        <begin position="227"/>
        <end position="230"/>
    </location>
</feature>
<feature type="strand" evidence="8">
    <location>
        <begin position="235"/>
        <end position="246"/>
    </location>
</feature>
<feature type="strand" evidence="8">
    <location>
        <begin position="249"/>
        <end position="260"/>
    </location>
</feature>
<feature type="helix" evidence="8">
    <location>
        <begin position="268"/>
        <end position="271"/>
    </location>
</feature>
<feature type="helix" evidence="8">
    <location>
        <begin position="275"/>
        <end position="282"/>
    </location>
</feature>
<feature type="turn" evidence="8">
    <location>
        <begin position="286"/>
        <end position="289"/>
    </location>
</feature>
<feature type="helix" evidence="8">
    <location>
        <begin position="292"/>
        <end position="294"/>
    </location>
</feature>
<feature type="strand" evidence="8">
    <location>
        <begin position="295"/>
        <end position="298"/>
    </location>
</feature>
<protein>
    <recommendedName>
        <fullName>Endonuclease G, mitochondrial</fullName>
        <shortName>Endo G</shortName>
        <ecNumber>3.1.30.-</ecNumber>
    </recommendedName>
    <alternativeName>
        <fullName>Ced-3 protease suppressor 6</fullName>
    </alternativeName>
</protein>
<dbReference type="EC" id="3.1.30.-"/>
<dbReference type="EMBL" id="AF390558">
    <property type="protein sequence ID" value="AAK72007.1"/>
    <property type="molecule type" value="mRNA"/>
</dbReference>
<dbReference type="EMBL" id="FO080509">
    <property type="protein sequence ID" value="CCD64257.1"/>
    <property type="molecule type" value="Genomic_DNA"/>
</dbReference>
<dbReference type="RefSeq" id="NP_491371.1">
    <property type="nucleotide sequence ID" value="NM_058970.6"/>
</dbReference>
<dbReference type="PDB" id="3S5B">
    <property type="method" value="X-ray"/>
    <property type="resolution" value="1.80 A"/>
    <property type="chains" value="A/B=63-303"/>
</dbReference>
<dbReference type="PDB" id="4QN0">
    <property type="method" value="X-ray"/>
    <property type="resolution" value="2.74 A"/>
    <property type="chains" value="A/B/C/D=64-302"/>
</dbReference>
<dbReference type="PDB" id="5GKC">
    <property type="method" value="X-ray"/>
    <property type="resolution" value="1.89 A"/>
    <property type="chains" value="A/B=63-305"/>
</dbReference>
<dbReference type="PDB" id="5GKP">
    <property type="method" value="X-ray"/>
    <property type="resolution" value="2.30 A"/>
    <property type="chains" value="A/B=63-305"/>
</dbReference>
<dbReference type="PDBsum" id="3S5B"/>
<dbReference type="PDBsum" id="4QN0"/>
<dbReference type="PDBsum" id="5GKC"/>
<dbReference type="PDBsum" id="5GKP"/>
<dbReference type="SMR" id="Q95NM6"/>
<dbReference type="BioGRID" id="37514">
    <property type="interactions" value="10"/>
</dbReference>
<dbReference type="FunCoup" id="Q95NM6">
    <property type="interactions" value="754"/>
</dbReference>
<dbReference type="IntAct" id="Q95NM6">
    <property type="interactions" value="2"/>
</dbReference>
<dbReference type="STRING" id="6239.C41D11.8.1"/>
<dbReference type="PaxDb" id="6239-C41D11.8"/>
<dbReference type="PeptideAtlas" id="Q95NM6"/>
<dbReference type="EnsemblMetazoa" id="C41D11.8.1">
    <property type="protein sequence ID" value="C41D11.8.1"/>
    <property type="gene ID" value="WBGene00000787"/>
</dbReference>
<dbReference type="GeneID" id="172045"/>
<dbReference type="KEGG" id="cel:CELE_C41D11.8"/>
<dbReference type="UCSC" id="C41D11.8.1">
    <property type="organism name" value="c. elegans"/>
</dbReference>
<dbReference type="AGR" id="WB:WBGene00000787"/>
<dbReference type="CTD" id="172045"/>
<dbReference type="WormBase" id="C41D11.8">
    <property type="protein sequence ID" value="CE29488"/>
    <property type="gene ID" value="WBGene00000787"/>
    <property type="gene designation" value="cps-6"/>
</dbReference>
<dbReference type="eggNOG" id="KOG3721">
    <property type="taxonomic scope" value="Eukaryota"/>
</dbReference>
<dbReference type="GeneTree" id="ENSGT00940000160987"/>
<dbReference type="HOGENOM" id="CLU_055174_0_1_1"/>
<dbReference type="InParanoid" id="Q95NM6"/>
<dbReference type="OMA" id="YVMPNQV"/>
<dbReference type="OrthoDB" id="5418055at2759"/>
<dbReference type="PhylomeDB" id="Q95NM6"/>
<dbReference type="EvolutionaryTrace" id="Q95NM6"/>
<dbReference type="PRO" id="PR:Q95NM6"/>
<dbReference type="Proteomes" id="UP000001940">
    <property type="component" value="Chromosome I"/>
</dbReference>
<dbReference type="Bgee" id="WBGene00000787">
    <property type="expression patterns" value="Expressed in larva and 4 other cell types or tissues"/>
</dbReference>
<dbReference type="GO" id="GO:0005743">
    <property type="term" value="C:mitochondrial inner membrane"/>
    <property type="evidence" value="ECO:0000318"/>
    <property type="project" value="GO_Central"/>
</dbReference>
<dbReference type="GO" id="GO:0005758">
    <property type="term" value="C:mitochondrial intermembrane space"/>
    <property type="evidence" value="ECO:0000314"/>
    <property type="project" value="FlyBase"/>
</dbReference>
<dbReference type="GO" id="GO:0005739">
    <property type="term" value="C:mitochondrion"/>
    <property type="evidence" value="ECO:0000314"/>
    <property type="project" value="WormBase"/>
</dbReference>
<dbReference type="GO" id="GO:0005634">
    <property type="term" value="C:nucleus"/>
    <property type="evidence" value="ECO:0000318"/>
    <property type="project" value="GO_Central"/>
</dbReference>
<dbReference type="GO" id="GO:0004520">
    <property type="term" value="F:DNA endonuclease activity"/>
    <property type="evidence" value="ECO:0000314"/>
    <property type="project" value="WormBase"/>
</dbReference>
<dbReference type="GO" id="GO:1990238">
    <property type="term" value="F:double-stranded DNA endonuclease activity"/>
    <property type="evidence" value="ECO:0000314"/>
    <property type="project" value="WormBase"/>
</dbReference>
<dbReference type="GO" id="GO:0004519">
    <property type="term" value="F:endonuclease activity"/>
    <property type="evidence" value="ECO:0000314"/>
    <property type="project" value="WormBase"/>
</dbReference>
<dbReference type="GO" id="GO:0046872">
    <property type="term" value="F:metal ion binding"/>
    <property type="evidence" value="ECO:0007669"/>
    <property type="project" value="UniProtKB-KW"/>
</dbReference>
<dbReference type="GO" id="GO:0042803">
    <property type="term" value="F:protein homodimerization activity"/>
    <property type="evidence" value="ECO:0000353"/>
    <property type="project" value="WormBase"/>
</dbReference>
<dbReference type="GO" id="GO:0004521">
    <property type="term" value="F:RNA endonuclease activity"/>
    <property type="evidence" value="ECO:0000314"/>
    <property type="project" value="WormBase"/>
</dbReference>
<dbReference type="GO" id="GO:0043565">
    <property type="term" value="F:sequence-specific DNA binding"/>
    <property type="evidence" value="ECO:0000314"/>
    <property type="project" value="WormBase"/>
</dbReference>
<dbReference type="GO" id="GO:0000014">
    <property type="term" value="F:single-stranded DNA endodeoxyribonuclease activity"/>
    <property type="evidence" value="ECO:0000318"/>
    <property type="project" value="GO_Central"/>
</dbReference>
<dbReference type="GO" id="GO:0006309">
    <property type="term" value="P:apoptotic DNA fragmentation"/>
    <property type="evidence" value="ECO:0000314"/>
    <property type="project" value="WormBase"/>
</dbReference>
<dbReference type="GO" id="GO:0006308">
    <property type="term" value="P:DNA catabolic process"/>
    <property type="evidence" value="ECO:0000314"/>
    <property type="project" value="WormBase"/>
</dbReference>
<dbReference type="GO" id="GO:0006401">
    <property type="term" value="P:RNA catabolic process"/>
    <property type="evidence" value="ECO:0000314"/>
    <property type="project" value="WormBase"/>
</dbReference>
<dbReference type="CDD" id="cd00091">
    <property type="entry name" value="NUC"/>
    <property type="match status" value="1"/>
</dbReference>
<dbReference type="FunFam" id="3.40.570.10:FF:000002">
    <property type="entry name" value="Endonuclease G, mitochondrial"/>
    <property type="match status" value="1"/>
</dbReference>
<dbReference type="Gene3D" id="3.40.570.10">
    <property type="entry name" value="Extracellular Endonuclease, subunit A"/>
    <property type="match status" value="1"/>
</dbReference>
<dbReference type="InterPro" id="IPR018524">
    <property type="entry name" value="DNA/RNA_endonuclease_AS"/>
</dbReference>
<dbReference type="InterPro" id="IPR044929">
    <property type="entry name" value="DNA/RNA_non-sp_Endonuclease_sf"/>
</dbReference>
<dbReference type="InterPro" id="IPR001604">
    <property type="entry name" value="Endo_G_ENPP1-like_dom"/>
</dbReference>
<dbReference type="InterPro" id="IPR020821">
    <property type="entry name" value="ENPP1-3/EXOG-like_nuc-like"/>
</dbReference>
<dbReference type="InterPro" id="IPR044925">
    <property type="entry name" value="His-Me_finger_sf"/>
</dbReference>
<dbReference type="InterPro" id="IPR040255">
    <property type="entry name" value="Non-specific_endonuclease"/>
</dbReference>
<dbReference type="PANTHER" id="PTHR13966:SF5">
    <property type="entry name" value="ENDONUCLEASE G, MITOCHONDRIAL"/>
    <property type="match status" value="1"/>
</dbReference>
<dbReference type="PANTHER" id="PTHR13966">
    <property type="entry name" value="ENDONUCLEASE RELATED"/>
    <property type="match status" value="1"/>
</dbReference>
<dbReference type="Pfam" id="PF01223">
    <property type="entry name" value="Endonuclease_NS"/>
    <property type="match status" value="1"/>
</dbReference>
<dbReference type="SMART" id="SM00892">
    <property type="entry name" value="Endonuclease_NS"/>
    <property type="match status" value="1"/>
</dbReference>
<dbReference type="SMART" id="SM00477">
    <property type="entry name" value="NUC"/>
    <property type="match status" value="1"/>
</dbReference>
<dbReference type="SUPFAM" id="SSF54060">
    <property type="entry name" value="His-Me finger endonucleases"/>
    <property type="match status" value="1"/>
</dbReference>
<dbReference type="PROSITE" id="PS01070">
    <property type="entry name" value="NUCLEASE_NON_SPEC"/>
    <property type="match status" value="1"/>
</dbReference>
<keyword id="KW-0002">3D-structure</keyword>
<keyword id="KW-0053">Apoptosis</keyword>
<keyword id="KW-1015">Disulfide bond</keyword>
<keyword id="KW-0255">Endonuclease</keyword>
<keyword id="KW-0378">Hydrolase</keyword>
<keyword id="KW-0460">Magnesium</keyword>
<keyword id="KW-0479">Metal-binding</keyword>
<keyword id="KW-0496">Mitochondrion</keyword>
<keyword id="KW-0540">Nuclease</keyword>
<keyword id="KW-1185">Reference proteome</keyword>
<keyword id="KW-0809">Transit peptide</keyword>
<name>NUCG_CAEEL</name>
<proteinExistence type="evidence at protein level"/>
<comment type="function">
    <text evidence="5 6">Endonuclease important for programmed cell death; it mediates apoptotic DNA fragmentation.</text>
</comment>
<comment type="cofactor">
    <cofactor>
        <name>Mg(2+)</name>
        <dbReference type="ChEBI" id="CHEBI:18420"/>
    </cofactor>
</comment>
<comment type="subunit">
    <text evidence="2 6">Homodimer; disulfide-linked (By similarity). Interacts with crn-5, crn-4, crn-1 and cyn-13 (PubMed:12718884).</text>
</comment>
<comment type="subcellular location">
    <subcellularLocation>
        <location evidence="5">Mitochondrion</location>
    </subcellularLocation>
</comment>
<comment type="disruption phenotype">
    <text evidence="6">RNAi-mediated knockdown results in accumulation of apoptotic DNA in 1.5-fold stage embryos and delayed appearance of embryonic cell corpses during development.</text>
</comment>
<comment type="miscellaneous">
    <text evidence="1">The active site contains 1 hydrated magnesium ion that has only 1 direct interaction with the protein; all other interactions are via water molecules.</text>
</comment>
<comment type="similarity">
    <text evidence="7">Belongs to the DNA/RNA non-specific endonuclease family.</text>
</comment>
<sequence length="308" mass="34511">MIGKVAGTAAIAGISFLAGKYSNDDLPIFRNVQSATNVPMNQIQVSEPMTVKPASLNADAMGPSRSAEIMKHGYPGFTNVRTYEDFVLSYDYKTRTAHWVCEHLTPERLKHAEGVDRKLCEFKPDITFPQKFLSQNTDYKCSGFDRGHLAAAGNHRKSQLAVDQTFYLSNMSPQVGRGFNRDKWNDLEMHCRRVAKKMINSYIITGPLYLPKLEGDGKKYIKYQVIGDNNVAVPTHFFKVALFEVTPGKFELESYILPNAVIEDTVEISKFHVPLDAVERSAGLEIFARLDPKSIVKENGAKKGGLLW</sequence>
<gene>
    <name type="primary">cps-6</name>
    <name type="ORF">C41D11.8</name>
</gene>
<reference key="1">
    <citation type="journal article" date="2001" name="Nature">
        <title>Mitochondrial endonuclease G is important for apoptosis in C. elegans.</title>
        <authorList>
            <person name="Parrish J."/>
            <person name="Li L."/>
            <person name="Klotz K."/>
            <person name="Ledwich D."/>
            <person name="Wang X."/>
            <person name="Xue D."/>
        </authorList>
    </citation>
    <scope>NUCLEOTIDE SEQUENCE [MRNA]</scope>
    <scope>FUNCTION</scope>
    <scope>SUBCELLULAR LOCATION</scope>
</reference>
<reference key="2">
    <citation type="journal article" date="1998" name="Science">
        <title>Genome sequence of the nematode C. elegans: a platform for investigating biology.</title>
        <authorList>
            <consortium name="The C. elegans sequencing consortium"/>
        </authorList>
    </citation>
    <scope>NUCLEOTIDE SEQUENCE [LARGE SCALE GENOMIC DNA]</scope>
    <source>
        <strain>Bristol N2</strain>
    </source>
</reference>
<reference key="3">
    <citation type="journal article" date="2003" name="Mol. Cell">
        <title>Functional genomic analysis of apoptotic DNA degradation in C. elegans.</title>
        <authorList>
            <person name="Parrish J.Z."/>
            <person name="Xue D."/>
        </authorList>
    </citation>
    <scope>FUNCTION</scope>
    <scope>INTERACTION WITH CRN-5; CRN-4; CRN-1 AND CYN-13</scope>
    <scope>DISRUPTION PHENOTYPE</scope>
</reference>